<accession>Q8K451</accession>
<comment type="function">
    <text evidence="1">Orphan G-protein coupled receptor involved in the regulation of hair cell orientation in mechanosensory organs of the inner ear. It is required to trigger a 180 degree reversal in hair cell orientation, creating a virtual line of polarity reversal (LPR) across which stereociliary bundles are arranged in opposite orientations.</text>
</comment>
<comment type="subcellular location">
    <subcellularLocation>
        <location>Cell membrane</location>
        <topology>Multi-pass membrane protein</topology>
    </subcellularLocation>
</comment>
<comment type="tissue specificity">
    <text evidence="4">Widely expressed throughout the brain and is particularly dense in the olfactory tubercles, islands of Calleja, nucleus accumbens, piriform cortex and all fields of the hippocampus.</text>
</comment>
<comment type="similarity">
    <text evidence="5">Belongs to the G-protein coupled receptor 3 family. GABA-B receptor subfamily.</text>
</comment>
<dbReference type="EMBL" id="AF488741">
    <property type="protein sequence ID" value="AAN03797.1"/>
    <property type="molecule type" value="mRNA"/>
</dbReference>
<dbReference type="RefSeq" id="NP_695207.1">
    <property type="nucleotide sequence ID" value="NM_153295.1"/>
</dbReference>
<dbReference type="FunCoup" id="Q8K451">
    <property type="interactions" value="10"/>
</dbReference>
<dbReference type="STRING" id="10116.ENSRNOP00000003773"/>
<dbReference type="GlyCosmos" id="Q8K451">
    <property type="glycosylation" value="1 site, No reported glycans"/>
</dbReference>
<dbReference type="GlyGen" id="Q8K451">
    <property type="glycosylation" value="1 site"/>
</dbReference>
<dbReference type="iPTMnet" id="Q8K451"/>
<dbReference type="PhosphoSitePlus" id="Q8K451"/>
<dbReference type="PaxDb" id="10116-ENSRNOP00000003773"/>
<dbReference type="GeneID" id="260430"/>
<dbReference type="KEGG" id="rno:260430"/>
<dbReference type="UCSC" id="RGD:708438">
    <property type="organism name" value="rat"/>
</dbReference>
<dbReference type="AGR" id="RGD:708438"/>
<dbReference type="CTD" id="165829"/>
<dbReference type="RGD" id="708438">
    <property type="gene designation" value="Gpr156"/>
</dbReference>
<dbReference type="eggNOG" id="KOG1055">
    <property type="taxonomic scope" value="Eukaryota"/>
</dbReference>
<dbReference type="InParanoid" id="Q8K451"/>
<dbReference type="PhylomeDB" id="Q8K451"/>
<dbReference type="PRO" id="PR:Q8K451"/>
<dbReference type="Proteomes" id="UP000002494">
    <property type="component" value="Unplaced"/>
</dbReference>
<dbReference type="GO" id="GO:0038039">
    <property type="term" value="C:G protein-coupled receptor heterodimeric complex"/>
    <property type="evidence" value="ECO:0000318"/>
    <property type="project" value="GO_Central"/>
</dbReference>
<dbReference type="GO" id="GO:0005886">
    <property type="term" value="C:plasma membrane"/>
    <property type="evidence" value="ECO:0000266"/>
    <property type="project" value="RGD"/>
</dbReference>
<dbReference type="GO" id="GO:0004965">
    <property type="term" value="F:G protein-coupled GABA receptor activity"/>
    <property type="evidence" value="ECO:0000318"/>
    <property type="project" value="GO_Central"/>
</dbReference>
<dbReference type="GO" id="GO:0007214">
    <property type="term" value="P:gamma-aminobutyric acid signaling pathway"/>
    <property type="evidence" value="ECO:0000318"/>
    <property type="project" value="GO_Central"/>
</dbReference>
<dbReference type="GO" id="GO:0160194">
    <property type="term" value="P:stereocilium bundle organization"/>
    <property type="evidence" value="ECO:0000250"/>
    <property type="project" value="UniProtKB"/>
</dbReference>
<dbReference type="CDD" id="cd15292">
    <property type="entry name" value="7tmC_GPR156"/>
    <property type="match status" value="1"/>
</dbReference>
<dbReference type="InterPro" id="IPR002455">
    <property type="entry name" value="GPCR3_GABA-B"/>
</dbReference>
<dbReference type="InterPro" id="IPR017978">
    <property type="entry name" value="GPCR_3_C"/>
</dbReference>
<dbReference type="InterPro" id="IPR041946">
    <property type="entry name" value="GPR156_7TM"/>
</dbReference>
<dbReference type="PANTHER" id="PTHR10519:SF20">
    <property type="entry name" value="G-PROTEIN COUPLED RECEPTOR 156-RELATED"/>
    <property type="match status" value="1"/>
</dbReference>
<dbReference type="PANTHER" id="PTHR10519">
    <property type="entry name" value="GABA-B RECEPTOR"/>
    <property type="match status" value="1"/>
</dbReference>
<dbReference type="Pfam" id="PF00003">
    <property type="entry name" value="7tm_3"/>
    <property type="match status" value="1"/>
</dbReference>
<dbReference type="PRINTS" id="PR01176">
    <property type="entry name" value="GABABRECEPTR"/>
</dbReference>
<dbReference type="PROSITE" id="PS50259">
    <property type="entry name" value="G_PROTEIN_RECEP_F3_4"/>
    <property type="match status" value="1"/>
</dbReference>
<gene>
    <name type="primary">Gpr156</name>
    <name type="synonym">Gababl</name>
</gene>
<name>GP156_RAT</name>
<reference key="1">
    <citation type="journal article" date="2003" name="Brain Res. Mol. Brain Res.">
        <title>Molecular cloning and characterization of a novel GABA(B)-related G-protein coupled receptor.</title>
        <authorList>
            <person name="Calver A.R."/>
            <person name="Michalovich D."/>
            <person name="Testa T.T."/>
            <person name="Robbins M.J."/>
            <person name="Jaillard C."/>
            <person name="Hill J."/>
            <person name="Szekeres P.G."/>
            <person name="Charles K.J."/>
            <person name="Jourdain S."/>
            <person name="Holbrook J.D."/>
            <person name="Boyfield I."/>
            <person name="Patel N."/>
            <person name="Medhurst A.D."/>
            <person name="Pangalos M.N."/>
        </authorList>
    </citation>
    <scope>NUCLEOTIDE SEQUENCE [MRNA]</scope>
    <scope>TISSUE SPECIFICITY</scope>
    <source>
        <strain>Sprague-Dawley</strain>
    </source>
</reference>
<sequence length="792" mass="86426">MEPEINCSEFCDSFPGQELDRRPLHDLCKTTITDSQHGSADISPLSPALLGVIWTFLSCGLLLVLFFLAFTIRCRKNRIVKMSSPNLNIVTLLGSCLTYSSAYLFGIQDALVGSSVEALIQTRLSLLCIGTTLVFGPILGKSWRLYKVFTQRVPDKRVIIKDLQLLGLVAALVVADVILLVTWVLTDPIQCLQILGVSMKVTGRDVSCSLTNTHFCASRYSDVWIALVLGCKGLLLLYGAYLAGLTNHVSSPPVNQSLTIMVGVNLLLLTAGLLFVVTRYLHSWPNLVFGLTSGGIFVCTTTVNCCVFLPQLRQRKAFEGENQTIRHMAKYFSTPSKTFRSKFDEDQSCHLRDEXSCMERLLTEKNAVIESLQEQVSNAKEKLVKLMSAECALDSPEWAVPAAASAGGPAECXATSEKESGAAAEDSLPASAASQHMQGPGASRRDXSPSPDQKYDMPLKQFCDHLDMGCSQKPKAEQSEGPERGNQEPMAPGQSLMTDGVACEPHRPRQNSEVLPERLPRVSSVVREKLQEVLQELDLGTEAPLSPLPCPQQPWKSNTSGSPQKLSPSKLGFSPYVVRRRRAAQRARSRIPGSVGLKMGHQANNTVSGSQNGLIVQNRDSPRLDHHNARSKEPRSSSVKPSPISAPHQRRGSLEGSKQCETEPQEARGYSVAFPRQPSASAPAQSSTAPCLSSXPALPRQRQPLPLLSPGCPSLSSGCYNLDSESSSSDEFFCRCHRPYCEICFQSSLDSNDSDTSDSDLEQTSGLASWEKLLARSKPVVNFKDDLKPTLV</sequence>
<proteinExistence type="evidence at transcript level"/>
<feature type="chain" id="PRO_0000206901" description="Probable G-protein coupled receptor 156">
    <location>
        <begin position="1"/>
        <end position="792"/>
    </location>
</feature>
<feature type="topological domain" description="Extracellular" evidence="2">
    <location>
        <begin position="1"/>
        <end position="49"/>
    </location>
</feature>
<feature type="transmembrane region" description="Helical; Name=1" evidence="2">
    <location>
        <begin position="50"/>
        <end position="70"/>
    </location>
</feature>
<feature type="topological domain" description="Cytoplasmic" evidence="2">
    <location>
        <begin position="71"/>
        <end position="86"/>
    </location>
</feature>
<feature type="transmembrane region" description="Helical; Name=2" evidence="2">
    <location>
        <begin position="87"/>
        <end position="107"/>
    </location>
</feature>
<feature type="topological domain" description="Extracellular" evidence="2">
    <location>
        <begin position="108"/>
        <end position="118"/>
    </location>
</feature>
<feature type="transmembrane region" description="Helical; Name=3" evidence="2">
    <location>
        <begin position="119"/>
        <end position="139"/>
    </location>
</feature>
<feature type="topological domain" description="Cytoplasmic" evidence="2">
    <location>
        <begin position="140"/>
        <end position="164"/>
    </location>
</feature>
<feature type="transmembrane region" description="Helical; Name=4" evidence="2">
    <location>
        <begin position="165"/>
        <end position="185"/>
    </location>
</feature>
<feature type="topological domain" description="Extracellular" evidence="2">
    <location>
        <begin position="186"/>
        <end position="222"/>
    </location>
</feature>
<feature type="transmembrane region" description="Helical; Name=5" evidence="2">
    <location>
        <begin position="223"/>
        <end position="243"/>
    </location>
</feature>
<feature type="topological domain" description="Cytoplasmic" evidence="2">
    <location>
        <begin position="244"/>
        <end position="257"/>
    </location>
</feature>
<feature type="transmembrane region" description="Helical; Name=6" evidence="2">
    <location>
        <begin position="258"/>
        <end position="278"/>
    </location>
</feature>
<feature type="topological domain" description="Extracellular" evidence="2">
    <location>
        <begin position="279"/>
        <end position="287"/>
    </location>
</feature>
<feature type="transmembrane region" description="Helical; Name=7" evidence="2">
    <location>
        <begin position="288"/>
        <end position="308"/>
    </location>
</feature>
<feature type="topological domain" description="Cytoplasmic" evidence="2">
    <location>
        <begin position="309"/>
        <end position="792"/>
    </location>
</feature>
<feature type="region of interest" description="Disordered" evidence="3">
    <location>
        <begin position="407"/>
        <end position="457"/>
    </location>
</feature>
<feature type="region of interest" description="Disordered" evidence="3">
    <location>
        <begin position="469"/>
        <end position="516"/>
    </location>
</feature>
<feature type="region of interest" description="Disordered" evidence="3">
    <location>
        <begin position="538"/>
        <end position="704"/>
    </location>
</feature>
<feature type="coiled-coil region" evidence="2">
    <location>
        <begin position="354"/>
        <end position="390"/>
    </location>
</feature>
<feature type="compositionally biased region" description="Low complexity" evidence="3">
    <location>
        <begin position="422"/>
        <end position="434"/>
    </location>
</feature>
<feature type="compositionally biased region" description="Basic and acidic residues" evidence="3">
    <location>
        <begin position="443"/>
        <end position="457"/>
    </location>
</feature>
<feature type="compositionally biased region" description="Basic and acidic residues" evidence="3">
    <location>
        <begin position="474"/>
        <end position="486"/>
    </location>
</feature>
<feature type="compositionally biased region" description="Polar residues" evidence="3">
    <location>
        <begin position="554"/>
        <end position="567"/>
    </location>
</feature>
<feature type="compositionally biased region" description="Basic residues" evidence="3">
    <location>
        <begin position="578"/>
        <end position="589"/>
    </location>
</feature>
<feature type="compositionally biased region" description="Polar residues" evidence="3">
    <location>
        <begin position="602"/>
        <end position="619"/>
    </location>
</feature>
<feature type="compositionally biased region" description="Basic and acidic residues" evidence="3">
    <location>
        <begin position="620"/>
        <end position="635"/>
    </location>
</feature>
<feature type="compositionally biased region" description="Low complexity" evidence="3">
    <location>
        <begin position="675"/>
        <end position="704"/>
    </location>
</feature>
<feature type="glycosylation site" description="N-linked (GlcNAc...) asparagine" evidence="2">
    <location>
        <position position="6"/>
    </location>
</feature>
<protein>
    <recommendedName>
        <fullName>Probable G-protein coupled receptor 156</fullName>
    </recommendedName>
    <alternativeName>
        <fullName>GABAB-related G-protein coupled receptor</fullName>
    </alternativeName>
</protein>
<keyword id="KW-1003">Cell membrane</keyword>
<keyword id="KW-0175">Coiled coil</keyword>
<keyword id="KW-0297">G-protein coupled receptor</keyword>
<keyword id="KW-0325">Glycoprotein</keyword>
<keyword id="KW-0472">Membrane</keyword>
<keyword id="KW-0675">Receptor</keyword>
<keyword id="KW-1185">Reference proteome</keyword>
<keyword id="KW-0807">Transducer</keyword>
<keyword id="KW-0812">Transmembrane</keyword>
<keyword id="KW-1133">Transmembrane helix</keyword>
<evidence type="ECO:0000250" key="1">
    <source>
        <dbReference type="UniProtKB" id="Q6PCP7"/>
    </source>
</evidence>
<evidence type="ECO:0000255" key="2"/>
<evidence type="ECO:0000256" key="3">
    <source>
        <dbReference type="SAM" id="MobiDB-lite"/>
    </source>
</evidence>
<evidence type="ECO:0000269" key="4">
    <source>
    </source>
</evidence>
<evidence type="ECO:0000305" key="5"/>
<organism>
    <name type="scientific">Rattus norvegicus</name>
    <name type="common">Rat</name>
    <dbReference type="NCBI Taxonomy" id="10116"/>
    <lineage>
        <taxon>Eukaryota</taxon>
        <taxon>Metazoa</taxon>
        <taxon>Chordata</taxon>
        <taxon>Craniata</taxon>
        <taxon>Vertebrata</taxon>
        <taxon>Euteleostomi</taxon>
        <taxon>Mammalia</taxon>
        <taxon>Eutheria</taxon>
        <taxon>Euarchontoglires</taxon>
        <taxon>Glires</taxon>
        <taxon>Rodentia</taxon>
        <taxon>Myomorpha</taxon>
        <taxon>Muroidea</taxon>
        <taxon>Muridae</taxon>
        <taxon>Murinae</taxon>
        <taxon>Rattus</taxon>
    </lineage>
</organism>